<reference key="1">
    <citation type="journal article" date="2005" name="Nature">
        <title>Genomic sequence of the pathogenic and allergenic filamentous fungus Aspergillus fumigatus.</title>
        <authorList>
            <person name="Nierman W.C."/>
            <person name="Pain A."/>
            <person name="Anderson M.J."/>
            <person name="Wortman J.R."/>
            <person name="Kim H.S."/>
            <person name="Arroyo J."/>
            <person name="Berriman M."/>
            <person name="Abe K."/>
            <person name="Archer D.B."/>
            <person name="Bermejo C."/>
            <person name="Bennett J.W."/>
            <person name="Bowyer P."/>
            <person name="Chen D."/>
            <person name="Collins M."/>
            <person name="Coulsen R."/>
            <person name="Davies R."/>
            <person name="Dyer P.S."/>
            <person name="Farman M.L."/>
            <person name="Fedorova N."/>
            <person name="Fedorova N.D."/>
            <person name="Feldblyum T.V."/>
            <person name="Fischer R."/>
            <person name="Fosker N."/>
            <person name="Fraser A."/>
            <person name="Garcia J.L."/>
            <person name="Garcia M.J."/>
            <person name="Goble A."/>
            <person name="Goldman G.H."/>
            <person name="Gomi K."/>
            <person name="Griffith-Jones S."/>
            <person name="Gwilliam R."/>
            <person name="Haas B.J."/>
            <person name="Haas H."/>
            <person name="Harris D.E."/>
            <person name="Horiuchi H."/>
            <person name="Huang J."/>
            <person name="Humphray S."/>
            <person name="Jimenez J."/>
            <person name="Keller N."/>
            <person name="Khouri H."/>
            <person name="Kitamoto K."/>
            <person name="Kobayashi T."/>
            <person name="Konzack S."/>
            <person name="Kulkarni R."/>
            <person name="Kumagai T."/>
            <person name="Lafton A."/>
            <person name="Latge J.-P."/>
            <person name="Li W."/>
            <person name="Lord A."/>
            <person name="Lu C."/>
            <person name="Majoros W.H."/>
            <person name="May G.S."/>
            <person name="Miller B.L."/>
            <person name="Mohamoud Y."/>
            <person name="Molina M."/>
            <person name="Monod M."/>
            <person name="Mouyna I."/>
            <person name="Mulligan S."/>
            <person name="Murphy L.D."/>
            <person name="O'Neil S."/>
            <person name="Paulsen I."/>
            <person name="Penalva M.A."/>
            <person name="Pertea M."/>
            <person name="Price C."/>
            <person name="Pritchard B.L."/>
            <person name="Quail M.A."/>
            <person name="Rabbinowitsch E."/>
            <person name="Rawlins N."/>
            <person name="Rajandream M.A."/>
            <person name="Reichard U."/>
            <person name="Renauld H."/>
            <person name="Robson G.D."/>
            <person name="Rodriguez de Cordoba S."/>
            <person name="Rodriguez-Pena J.M."/>
            <person name="Ronning C.M."/>
            <person name="Rutter S."/>
            <person name="Salzberg S.L."/>
            <person name="Sanchez M."/>
            <person name="Sanchez-Ferrero J.C."/>
            <person name="Saunders D."/>
            <person name="Seeger K."/>
            <person name="Squares R."/>
            <person name="Squares S."/>
            <person name="Takeuchi M."/>
            <person name="Tekaia F."/>
            <person name="Turner G."/>
            <person name="Vazquez de Aldana C.R."/>
            <person name="Weidman J."/>
            <person name="White O."/>
            <person name="Woodward J.R."/>
            <person name="Yu J.-H."/>
            <person name="Fraser C.M."/>
            <person name="Galagan J.E."/>
            <person name="Asai K."/>
            <person name="Machida M."/>
            <person name="Hall N."/>
            <person name="Barrell B.G."/>
            <person name="Denning D.W."/>
        </authorList>
    </citation>
    <scope>NUCLEOTIDE SEQUENCE [LARGE SCALE GENOMIC DNA]</scope>
    <source>
        <strain>ATCC MYA-4609 / CBS 101355 / FGSC A1100 / Af293</strain>
    </source>
</reference>
<evidence type="ECO:0000250" key="1"/>
<evidence type="ECO:0000256" key="2">
    <source>
        <dbReference type="SAM" id="MobiDB-lite"/>
    </source>
</evidence>
<evidence type="ECO:0000305" key="3"/>
<feature type="chain" id="PRO_0000395689" description="Probable catabolite repression protein creC">
    <location>
        <begin position="1"/>
        <end position="566"/>
    </location>
</feature>
<feature type="repeat" description="WD 1">
    <location>
        <begin position="225"/>
        <end position="265"/>
    </location>
</feature>
<feature type="repeat" description="WD 2">
    <location>
        <begin position="305"/>
        <end position="340"/>
    </location>
</feature>
<feature type="repeat" description="WD 3">
    <location>
        <begin position="341"/>
        <end position="379"/>
    </location>
</feature>
<feature type="repeat" description="WD 4">
    <location>
        <begin position="382"/>
        <end position="426"/>
    </location>
</feature>
<feature type="repeat" description="WD 5">
    <location>
        <begin position="498"/>
        <end position="535"/>
    </location>
</feature>
<feature type="region of interest" description="Disordered" evidence="2">
    <location>
        <begin position="433"/>
        <end position="470"/>
    </location>
</feature>
<feature type="region of interest" description="Disordered" evidence="2">
    <location>
        <begin position="533"/>
        <end position="566"/>
    </location>
</feature>
<feature type="compositionally biased region" description="Polar residues" evidence="2">
    <location>
        <begin position="433"/>
        <end position="447"/>
    </location>
</feature>
<feature type="compositionally biased region" description="Low complexity" evidence="2">
    <location>
        <begin position="540"/>
        <end position="566"/>
    </location>
</feature>
<name>CREC_ASPFU</name>
<comment type="function">
    <text evidence="1">Component of the regulatory network controlling carbon source utilization through ubiquitination and deubiquitination involving creA, creB, creC, creD and acrB. Required to prevent the proteolysis of the CreB deubiquitinating enzyme in the absence of carbon catabolite repression. CreB deubiquitinating enzyme stabilized in a complex with the CreC leads to the expression of genes such as those in the proline and quinate pathways (By similarity).</text>
</comment>
<comment type="subunit">
    <text evidence="1">Interacts with creB.</text>
</comment>
<comment type="similarity">
    <text evidence="3">Belongs to the WD repeat creC family.</text>
</comment>
<comment type="sequence caution" evidence="3">
    <conflict type="erroneous gene model prediction">
        <sequence resource="EMBL-CDS" id="EAL88639"/>
    </conflict>
</comment>
<organism>
    <name type="scientific">Aspergillus fumigatus (strain ATCC MYA-4609 / CBS 101355 / FGSC A1100 / Af293)</name>
    <name type="common">Neosartorya fumigata</name>
    <dbReference type="NCBI Taxonomy" id="330879"/>
    <lineage>
        <taxon>Eukaryota</taxon>
        <taxon>Fungi</taxon>
        <taxon>Dikarya</taxon>
        <taxon>Ascomycota</taxon>
        <taxon>Pezizomycotina</taxon>
        <taxon>Eurotiomycetes</taxon>
        <taxon>Eurotiomycetidae</taxon>
        <taxon>Eurotiales</taxon>
        <taxon>Aspergillaceae</taxon>
        <taxon>Aspergillus</taxon>
        <taxon>Aspergillus subgen. Fumigati</taxon>
    </lineage>
</organism>
<accession>Q4WN25</accession>
<proteinExistence type="inferred from homology"/>
<gene>
    <name type="primary">creC</name>
    <name type="ORF">AFUA_6G07860</name>
</gene>
<keyword id="KW-1185">Reference proteome</keyword>
<keyword id="KW-0677">Repeat</keyword>
<keyword id="KW-0804">Transcription</keyword>
<keyword id="KW-0805">Transcription regulation</keyword>
<keyword id="KW-0833">Ubl conjugation pathway</keyword>
<keyword id="KW-0853">WD repeat</keyword>
<dbReference type="EMBL" id="AAHF01000006">
    <property type="protein sequence ID" value="EAL88639.1"/>
    <property type="status" value="ALT_SEQ"/>
    <property type="molecule type" value="Genomic_DNA"/>
</dbReference>
<dbReference type="RefSeq" id="XP_750677.1">
    <property type="nucleotide sequence ID" value="XM_745584.1"/>
</dbReference>
<dbReference type="SMR" id="Q4WN25"/>
<dbReference type="STRING" id="330879.Q4WN25"/>
<dbReference type="GeneID" id="3508807"/>
<dbReference type="KEGG" id="afm:AFUA_6G07860"/>
<dbReference type="eggNOG" id="KOG2394">
    <property type="taxonomic scope" value="Eukaryota"/>
</dbReference>
<dbReference type="HOGENOM" id="CLU_016971_1_1_1"/>
<dbReference type="InParanoid" id="Q4WN25"/>
<dbReference type="OrthoDB" id="3367at2759"/>
<dbReference type="Proteomes" id="UP000002530">
    <property type="component" value="Chromosome 6"/>
</dbReference>
<dbReference type="GO" id="GO:0045013">
    <property type="term" value="P:carbon catabolite repression of transcription"/>
    <property type="evidence" value="ECO:0000250"/>
    <property type="project" value="UniProtKB"/>
</dbReference>
<dbReference type="FunFam" id="2.130.10.10:FF:000531">
    <property type="entry name" value="Probable catabolite repression protein creC"/>
    <property type="match status" value="1"/>
</dbReference>
<dbReference type="Gene3D" id="2.130.10.10">
    <property type="entry name" value="YVTN repeat-like/Quinoprotein amine dehydrogenase"/>
    <property type="match status" value="1"/>
</dbReference>
<dbReference type="InterPro" id="IPR015943">
    <property type="entry name" value="WD40/YVTN_repeat-like_dom_sf"/>
</dbReference>
<dbReference type="InterPro" id="IPR036322">
    <property type="entry name" value="WD40_repeat_dom_sf"/>
</dbReference>
<dbReference type="InterPro" id="IPR001680">
    <property type="entry name" value="WD40_rpt"/>
</dbReference>
<dbReference type="InterPro" id="IPR051362">
    <property type="entry name" value="WD_repeat_creC_regulators"/>
</dbReference>
<dbReference type="PANTHER" id="PTHR14107:SF16">
    <property type="entry name" value="AT02583P"/>
    <property type="match status" value="1"/>
</dbReference>
<dbReference type="PANTHER" id="PTHR14107">
    <property type="entry name" value="WD REPEAT PROTEIN"/>
    <property type="match status" value="1"/>
</dbReference>
<dbReference type="Pfam" id="PF00400">
    <property type="entry name" value="WD40"/>
    <property type="match status" value="2"/>
</dbReference>
<dbReference type="SMART" id="SM00320">
    <property type="entry name" value="WD40"/>
    <property type="match status" value="5"/>
</dbReference>
<dbReference type="SUPFAM" id="SSF50978">
    <property type="entry name" value="WD40 repeat-like"/>
    <property type="match status" value="1"/>
</dbReference>
<dbReference type="PROSITE" id="PS50082">
    <property type="entry name" value="WD_REPEATS_2"/>
    <property type="match status" value="1"/>
</dbReference>
<dbReference type="PROSITE" id="PS50294">
    <property type="entry name" value="WD_REPEATS_REGION"/>
    <property type="match status" value="1"/>
</dbReference>
<sequence>MAVPVVETNNILSHPEGGCPLQVGEGTYELKDDLHLATPPPHPSEAPIINPNPLATVPTPPTSGVKVSLVCVSPRSRTPSFISKQIVTAPPFGDGNPALVPAPVKDGLKRRKPKNNIIKSSSSFVSRVITHEVATKRLSERSPEGLFAFANINRAFQWLDLSSKQKEDPLAKILFTKAHMLCHDINEVTKSPSHIDVVMGSSAGDIIWYEPISQKYARINKNGVVCNSPVTHIKWIPGSENLFMASHANGQLVVYDKEKEDALFTPEIQDQSAEAVKASSTQPLQVLKSVNSRNQKTNPVALWKLANQRISHFAFSPDQRHLAVVLEDGSLRVMDYLKEDYYGGLICVCWSPDGKYIVTGGQDDLVTIWSFPERKIVARCQGHNSWVSAVAFDPWQCDERTYRFGSVGDDCRLLLWDFSVGMLHRPKVHQTSARQRTSMVAGSSQYGNRHRADSVGNRMRSDSQRTANTYESCDQAVRHPVEPRARTALLPPIMSKVVGTDPICWLGFQEDCIMTSSLEGHIRTWDRPREGINDKYNDQSSSTAVSASAAGSGSISGLAESTMGSL</sequence>
<protein>
    <recommendedName>
        <fullName>Probable catabolite repression protein creC</fullName>
    </recommendedName>
</protein>